<comment type="function">
    <text evidence="3">S-adenosyl-L-methionine-dependent methyltransferase. Probably involved in glucosinolate metabolism and defense against phytopathogens. Highly reactive to thiocyanate (NCS(-)) derived from myrosinase-mediated hydrolysis of glucosinolates upon tissue damage. Also accepts halid ions as substrates with a lower affinity.</text>
</comment>
<comment type="catalytic activity">
    <reaction evidence="4">
        <text>thiocyanate + S-adenosyl-L-methionine = methyl thiocyanate + S-adenosyl-L-homocysteine</text>
        <dbReference type="Rhea" id="RHEA:28014"/>
        <dbReference type="ChEBI" id="CHEBI:18022"/>
        <dbReference type="ChEBI" id="CHEBI:57856"/>
        <dbReference type="ChEBI" id="CHEBI:59789"/>
        <dbReference type="ChEBI" id="CHEBI:61112"/>
        <dbReference type="EC" id="2.1.1.n4"/>
    </reaction>
</comment>
<comment type="biophysicochemical properties">
    <kinetics>
        <KM evidence="4">1.65 uM for thiocyanate</KM>
        <KM evidence="4">8000 uM for iodide</KM>
        <KM evidence="4">52 uM for S-adenosyl-L-methionine</KM>
        <text>The KM values of the recombinant protein shown here are slightly lower than those of the native isoform.</text>
    </kinetics>
    <phDependence>
        <text evidence="4">Optimum pH is 8.</text>
    </phDependence>
</comment>
<comment type="tissue specificity">
    <text evidence="4">Ubiquitous.</text>
</comment>
<comment type="developmental stage">
    <text evidence="4">Higher expression in young seedlings than in mature plants.</text>
</comment>
<comment type="similarity">
    <text evidence="2">Belongs to the class I-like SAM-binding methyltransferase superfamily. TPMT family.</text>
</comment>
<evidence type="ECO:0000250" key="1">
    <source>
        <dbReference type="UniProtKB" id="Q0WP12"/>
    </source>
</evidence>
<evidence type="ECO:0000255" key="2">
    <source>
        <dbReference type="PROSITE-ProRule" id="PRU00918"/>
    </source>
</evidence>
<evidence type="ECO:0000269" key="3">
    <source>
    </source>
</evidence>
<evidence type="ECO:0000269" key="4">
    <source>
    </source>
</evidence>
<organism>
    <name type="scientific">Brassica oleracea</name>
    <name type="common">Wild cabbage</name>
    <dbReference type="NCBI Taxonomy" id="3712"/>
    <lineage>
        <taxon>Eukaryota</taxon>
        <taxon>Viridiplantae</taxon>
        <taxon>Streptophyta</taxon>
        <taxon>Embryophyta</taxon>
        <taxon>Tracheophyta</taxon>
        <taxon>Spermatophyta</taxon>
        <taxon>Magnoliopsida</taxon>
        <taxon>eudicotyledons</taxon>
        <taxon>Gunneridae</taxon>
        <taxon>Pentapetalae</taxon>
        <taxon>rosids</taxon>
        <taxon>malvids</taxon>
        <taxon>Brassicales</taxon>
        <taxon>Brassicaceae</taxon>
        <taxon>Brassiceae</taxon>
        <taxon>Brassica</taxon>
    </lineage>
</organism>
<keyword id="KW-0903">Direct protein sequencing</keyword>
<keyword id="KW-0489">Methyltransferase</keyword>
<keyword id="KW-0597">Phosphoprotein</keyword>
<keyword id="KW-0949">S-adenosyl-L-methionine</keyword>
<keyword id="KW-0808">Transferase</keyword>
<sequence length="226" mass="25128">MAEEQQKAGHSNGENIIPPEEVAKFLPETVEEGGWEKCWEDGITPWDQGRATPLVVHLVDSSSLPLGRALVPGCGGGHDVVAMASPERFVVGLDISESALEKAAETYGSSPKAKYFTFVKEDFFTWRPNELFDLIFDYVVFCAIEPEMRPAWAKSMYELLKPDGELITLMYPITDHDGGPPYKVAVSTYEDVLVPVGFKAVSIEENPYSIATRKGKEKLGRWKKIN</sequence>
<feature type="chain" id="PRO_0000393280" description="Thiocyanate methyltransferase 1">
    <location>
        <begin position="1"/>
        <end position="226"/>
    </location>
</feature>
<feature type="binding site" evidence="1">
    <location>
        <position position="35"/>
    </location>
    <ligand>
        <name>S-adenosyl-L-methionine</name>
        <dbReference type="ChEBI" id="CHEBI:59789"/>
    </ligand>
</feature>
<feature type="binding site" evidence="1 2">
    <location>
        <position position="39"/>
    </location>
    <ligand>
        <name>S-adenosyl-L-methionine</name>
        <dbReference type="ChEBI" id="CHEBI:59789"/>
    </ligand>
</feature>
<feature type="binding site" evidence="1">
    <location>
        <position position="46"/>
    </location>
    <ligand>
        <name>S-adenosyl-L-methionine</name>
        <dbReference type="ChEBI" id="CHEBI:59789"/>
    </ligand>
</feature>
<feature type="binding site" evidence="1">
    <location>
        <position position="73"/>
    </location>
    <ligand>
        <name>S-adenosyl-L-methionine</name>
        <dbReference type="ChEBI" id="CHEBI:59789"/>
    </ligand>
</feature>
<feature type="binding site" evidence="1 2">
    <location>
        <position position="94"/>
    </location>
    <ligand>
        <name>S-adenosyl-L-methionine</name>
        <dbReference type="ChEBI" id="CHEBI:59789"/>
    </ligand>
</feature>
<feature type="binding site" evidence="1">
    <location>
        <begin position="122"/>
        <end position="123"/>
    </location>
    <ligand>
        <name>S-adenosyl-L-methionine</name>
        <dbReference type="ChEBI" id="CHEBI:59789"/>
    </ligand>
</feature>
<feature type="binding site" evidence="1">
    <location>
        <position position="138"/>
    </location>
    <ligand>
        <name>S-adenosyl-L-methionine</name>
        <dbReference type="ChEBI" id="CHEBI:59789"/>
    </ligand>
</feature>
<feature type="modified residue" description="Phosphoserine" evidence="1">
    <location>
        <position position="85"/>
    </location>
</feature>
<dbReference type="EC" id="2.1.1.n4"/>
<dbReference type="EMBL" id="AF387791">
    <property type="protein sequence ID" value="AAK69760.1"/>
    <property type="molecule type" value="mRNA"/>
</dbReference>
<dbReference type="EMBL" id="AF387793">
    <property type="protein sequence ID" value="AAK69762.1"/>
    <property type="molecule type" value="Genomic_DNA"/>
</dbReference>
<dbReference type="SMR" id="Q93V78"/>
<dbReference type="BioCyc" id="MetaCyc:MONOMER-16290"/>
<dbReference type="BRENDA" id="2.1.1.9">
    <property type="organism ID" value="947"/>
</dbReference>
<dbReference type="GO" id="GO:0102215">
    <property type="term" value="F:thiocyanate methyltransferase activity"/>
    <property type="evidence" value="ECO:0007669"/>
    <property type="project" value="RHEA"/>
</dbReference>
<dbReference type="GO" id="GO:0018708">
    <property type="term" value="F:thiol S-methyltransferase activity"/>
    <property type="evidence" value="ECO:0000314"/>
    <property type="project" value="UniProtKB"/>
</dbReference>
<dbReference type="GO" id="GO:0032259">
    <property type="term" value="P:methylation"/>
    <property type="evidence" value="ECO:0007669"/>
    <property type="project" value="UniProtKB-KW"/>
</dbReference>
<dbReference type="CDD" id="cd02440">
    <property type="entry name" value="AdoMet_MTases"/>
    <property type="match status" value="1"/>
</dbReference>
<dbReference type="FunFam" id="3.40.50.150:FF:000281">
    <property type="entry name" value="Thiocyanate methyltransferase 1"/>
    <property type="match status" value="1"/>
</dbReference>
<dbReference type="Gene3D" id="3.40.50.150">
    <property type="entry name" value="Vaccinia Virus protein VP39"/>
    <property type="match status" value="1"/>
</dbReference>
<dbReference type="InterPro" id="IPR029063">
    <property type="entry name" value="SAM-dependent_MTases_sf"/>
</dbReference>
<dbReference type="InterPro" id="IPR008854">
    <property type="entry name" value="TPMT"/>
</dbReference>
<dbReference type="PANTHER" id="PTHR32183">
    <property type="match status" value="1"/>
</dbReference>
<dbReference type="PANTHER" id="PTHR32183:SF13">
    <property type="entry name" value="THIOCYANATE METHYLTRANSFERASE 1"/>
    <property type="match status" value="1"/>
</dbReference>
<dbReference type="Pfam" id="PF05724">
    <property type="entry name" value="TPMT"/>
    <property type="match status" value="1"/>
</dbReference>
<dbReference type="SUPFAM" id="SSF53335">
    <property type="entry name" value="S-adenosyl-L-methionine-dependent methyltransferases"/>
    <property type="match status" value="1"/>
</dbReference>
<dbReference type="PROSITE" id="PS51585">
    <property type="entry name" value="SAM_MT_TPMT"/>
    <property type="match status" value="1"/>
</dbReference>
<protein>
    <recommendedName>
        <fullName>Thiocyanate methyltransferase 1</fullName>
        <ecNumber>2.1.1.n4</ecNumber>
    </recommendedName>
</protein>
<name>TMT1_BRAOL</name>
<proteinExistence type="evidence at protein level"/>
<reference key="1">
    <citation type="journal article" date="2002" name="Plant Mol. Biol.">
        <title>Cloning and functional expression of two plant thiol methyltransferases: a new class of enzymes involved in the biosynthesis of sulfur volatiles.</title>
        <authorList>
            <person name="Attieh J."/>
            <person name="Djiana R."/>
            <person name="Koonjul P."/>
            <person name="Etienne C."/>
            <person name="Sparace S.A."/>
            <person name="Saini H.S."/>
        </authorList>
    </citation>
    <scope>NUCLEOTIDE SEQUENCE [GENOMIC DNA / MRNA]</scope>
    <scope>PROTEIN SEQUENCE OF 155-199</scope>
    <scope>TISSUE SPECIFICITY</scope>
    <scope>DEVELOPMENTAL STAGE</scope>
    <scope>BIOPHYSICOCHEMICAL PROPERTIES</scope>
    <scope>CATALYTIC ACTIVITY</scope>
    <source>
        <strain>cv. April Red</strain>
        <tissue>Leaf</tissue>
    </source>
</reference>
<reference key="2">
    <citation type="journal article" date="2000" name="Arch. Biochem. Biophys.">
        <title>Purification and properties of multiple isoforms of a novel thiol methyltransferase involved in the production of volatile sulfur compounds from Brassica oleracea.</title>
        <authorList>
            <person name="Attieh J."/>
            <person name="Sparace S.A."/>
            <person name="Saini H.S."/>
        </authorList>
    </citation>
    <scope>IDENTIFICATION</scope>
    <scope>FUNCTION</scope>
</reference>
<gene>
    <name type="primary">TMT1</name>
</gene>
<accession>Q93V78</accession>